<accession>Q0BPE6</accession>
<name>DAPB_GRABC</name>
<protein>
    <recommendedName>
        <fullName evidence="1">4-hydroxy-tetrahydrodipicolinate reductase</fullName>
        <shortName evidence="1">HTPA reductase</shortName>
        <ecNumber evidence="1">1.17.1.8</ecNumber>
    </recommendedName>
</protein>
<organism>
    <name type="scientific">Granulibacter bethesdensis (strain ATCC BAA-1260 / CGDNIH1)</name>
    <dbReference type="NCBI Taxonomy" id="391165"/>
    <lineage>
        <taxon>Bacteria</taxon>
        <taxon>Pseudomonadati</taxon>
        <taxon>Pseudomonadota</taxon>
        <taxon>Alphaproteobacteria</taxon>
        <taxon>Acetobacterales</taxon>
        <taxon>Acetobacteraceae</taxon>
        <taxon>Granulibacter</taxon>
    </lineage>
</organism>
<feature type="chain" id="PRO_1000008566" description="4-hydroxy-tetrahydrodipicolinate reductase">
    <location>
        <begin position="1"/>
        <end position="261"/>
    </location>
</feature>
<feature type="active site" description="Proton donor/acceptor" evidence="1">
    <location>
        <position position="149"/>
    </location>
</feature>
<feature type="active site" description="Proton donor" evidence="1">
    <location>
        <position position="153"/>
    </location>
</feature>
<feature type="binding site" evidence="1">
    <location>
        <begin position="13"/>
        <end position="18"/>
    </location>
    <ligand>
        <name>NAD(+)</name>
        <dbReference type="ChEBI" id="CHEBI:57540"/>
    </ligand>
</feature>
<feature type="binding site" evidence="1">
    <location>
        <begin position="91"/>
        <end position="93"/>
    </location>
    <ligand>
        <name>NAD(+)</name>
        <dbReference type="ChEBI" id="CHEBI:57540"/>
    </ligand>
</feature>
<feature type="binding site" evidence="1">
    <location>
        <begin position="115"/>
        <end position="118"/>
    </location>
    <ligand>
        <name>NAD(+)</name>
        <dbReference type="ChEBI" id="CHEBI:57540"/>
    </ligand>
</feature>
<feature type="binding site" evidence="1">
    <location>
        <position position="150"/>
    </location>
    <ligand>
        <name>(S)-2,3,4,5-tetrahydrodipicolinate</name>
        <dbReference type="ChEBI" id="CHEBI:16845"/>
    </ligand>
</feature>
<feature type="binding site" evidence="1">
    <location>
        <begin position="159"/>
        <end position="160"/>
    </location>
    <ligand>
        <name>(S)-2,3,4,5-tetrahydrodipicolinate</name>
        <dbReference type="ChEBI" id="CHEBI:16845"/>
    </ligand>
</feature>
<reference key="1">
    <citation type="journal article" date="2007" name="J. Bacteriol.">
        <title>Genome sequence analysis of the emerging human pathogenic acetic acid bacterium Granulibacter bethesdensis.</title>
        <authorList>
            <person name="Greenberg D.E."/>
            <person name="Porcella S.F."/>
            <person name="Zelazny A.M."/>
            <person name="Virtaneva K."/>
            <person name="Sturdevant D.E."/>
            <person name="Kupko J.J. III"/>
            <person name="Barbian K.D."/>
            <person name="Babar A."/>
            <person name="Dorward D.W."/>
            <person name="Holland S.M."/>
        </authorList>
    </citation>
    <scope>NUCLEOTIDE SEQUENCE [LARGE SCALE GENOMIC DNA]</scope>
    <source>
        <strain>ATCC BAA-1260 / CGDNIH1</strain>
    </source>
</reference>
<comment type="function">
    <text evidence="1">Catalyzes the conversion of 4-hydroxy-tetrahydrodipicolinate (HTPA) to tetrahydrodipicolinate.</text>
</comment>
<comment type="catalytic activity">
    <reaction evidence="1">
        <text>(S)-2,3,4,5-tetrahydrodipicolinate + NAD(+) + H2O = (2S,4S)-4-hydroxy-2,3,4,5-tetrahydrodipicolinate + NADH + H(+)</text>
        <dbReference type="Rhea" id="RHEA:35323"/>
        <dbReference type="ChEBI" id="CHEBI:15377"/>
        <dbReference type="ChEBI" id="CHEBI:15378"/>
        <dbReference type="ChEBI" id="CHEBI:16845"/>
        <dbReference type="ChEBI" id="CHEBI:57540"/>
        <dbReference type="ChEBI" id="CHEBI:57945"/>
        <dbReference type="ChEBI" id="CHEBI:67139"/>
        <dbReference type="EC" id="1.17.1.8"/>
    </reaction>
</comment>
<comment type="catalytic activity">
    <reaction evidence="1">
        <text>(S)-2,3,4,5-tetrahydrodipicolinate + NADP(+) + H2O = (2S,4S)-4-hydroxy-2,3,4,5-tetrahydrodipicolinate + NADPH + H(+)</text>
        <dbReference type="Rhea" id="RHEA:35331"/>
        <dbReference type="ChEBI" id="CHEBI:15377"/>
        <dbReference type="ChEBI" id="CHEBI:15378"/>
        <dbReference type="ChEBI" id="CHEBI:16845"/>
        <dbReference type="ChEBI" id="CHEBI:57783"/>
        <dbReference type="ChEBI" id="CHEBI:58349"/>
        <dbReference type="ChEBI" id="CHEBI:67139"/>
        <dbReference type="EC" id="1.17.1.8"/>
    </reaction>
</comment>
<comment type="pathway">
    <text evidence="1">Amino-acid biosynthesis; L-lysine biosynthesis via DAP pathway; (S)-tetrahydrodipicolinate from L-aspartate: step 4/4.</text>
</comment>
<comment type="subcellular location">
    <subcellularLocation>
        <location evidence="1">Cytoplasm</location>
    </subcellularLocation>
</comment>
<comment type="similarity">
    <text evidence="1">Belongs to the DapB family.</text>
</comment>
<comment type="caution">
    <text evidence="2">Was originally thought to be a dihydrodipicolinate reductase (DHDPR), catalyzing the conversion of dihydrodipicolinate to tetrahydrodipicolinate. However, it was shown in E.coli that the substrate of the enzymatic reaction is not dihydrodipicolinate (DHDP) but in fact (2S,4S)-4-hydroxy-2,3,4,5-tetrahydrodipicolinic acid (HTPA), the product released by the DapA-catalyzed reaction.</text>
</comment>
<proteinExistence type="inferred from homology"/>
<keyword id="KW-0028">Amino-acid biosynthesis</keyword>
<keyword id="KW-0963">Cytoplasm</keyword>
<keyword id="KW-0220">Diaminopimelate biosynthesis</keyword>
<keyword id="KW-0457">Lysine biosynthesis</keyword>
<keyword id="KW-0520">NAD</keyword>
<keyword id="KW-0521">NADP</keyword>
<keyword id="KW-0560">Oxidoreductase</keyword>
<keyword id="KW-1185">Reference proteome</keyword>
<sequence>MSTDRSIRIGIAGMAGRMGSLLVEEAAAQGTVSGGTLRPGSNSPAPVGIPAFADINTLAEASDAVIDFTSASTVQAHARALSKAGTAWILGTSGLSPADEKAVEEIAALVPVVYAPNFAPGVNLVLALAEKMAAALPGNRYDAEIVEMHHRRKIDSPSGTAIGLGRAVAAGRGVMLEEVIESGRHGHVGPRQPGAIGFAALRGGQVVGEHTLLFAADDEHIALTHRAFDRRAFARGAVQAALWVQGKPPGLYSMMDVLGMR</sequence>
<dbReference type="EC" id="1.17.1.8" evidence="1"/>
<dbReference type="EMBL" id="CP000394">
    <property type="protein sequence ID" value="ABI63306.1"/>
    <property type="molecule type" value="Genomic_DNA"/>
</dbReference>
<dbReference type="RefSeq" id="WP_011633108.1">
    <property type="nucleotide sequence ID" value="NC_008343.2"/>
</dbReference>
<dbReference type="SMR" id="Q0BPE6"/>
<dbReference type="STRING" id="391165.GbCGDNIH1_2408"/>
<dbReference type="KEGG" id="gbe:GbCGDNIH1_2408"/>
<dbReference type="eggNOG" id="COG0289">
    <property type="taxonomic scope" value="Bacteria"/>
</dbReference>
<dbReference type="HOGENOM" id="CLU_047479_2_2_5"/>
<dbReference type="UniPathway" id="UPA00034">
    <property type="reaction ID" value="UER00018"/>
</dbReference>
<dbReference type="Proteomes" id="UP000001963">
    <property type="component" value="Chromosome"/>
</dbReference>
<dbReference type="GO" id="GO:0005737">
    <property type="term" value="C:cytoplasm"/>
    <property type="evidence" value="ECO:0007669"/>
    <property type="project" value="UniProtKB-SubCell"/>
</dbReference>
<dbReference type="GO" id="GO:0008839">
    <property type="term" value="F:4-hydroxy-tetrahydrodipicolinate reductase"/>
    <property type="evidence" value="ECO:0007669"/>
    <property type="project" value="UniProtKB-EC"/>
</dbReference>
<dbReference type="GO" id="GO:0051287">
    <property type="term" value="F:NAD binding"/>
    <property type="evidence" value="ECO:0007669"/>
    <property type="project" value="UniProtKB-UniRule"/>
</dbReference>
<dbReference type="GO" id="GO:0050661">
    <property type="term" value="F:NADP binding"/>
    <property type="evidence" value="ECO:0007669"/>
    <property type="project" value="UniProtKB-UniRule"/>
</dbReference>
<dbReference type="GO" id="GO:0016726">
    <property type="term" value="F:oxidoreductase activity, acting on CH or CH2 groups, NAD or NADP as acceptor"/>
    <property type="evidence" value="ECO:0007669"/>
    <property type="project" value="UniProtKB-UniRule"/>
</dbReference>
<dbReference type="GO" id="GO:0019877">
    <property type="term" value="P:diaminopimelate biosynthetic process"/>
    <property type="evidence" value="ECO:0007669"/>
    <property type="project" value="UniProtKB-UniRule"/>
</dbReference>
<dbReference type="GO" id="GO:0009089">
    <property type="term" value="P:lysine biosynthetic process via diaminopimelate"/>
    <property type="evidence" value="ECO:0007669"/>
    <property type="project" value="UniProtKB-UniRule"/>
</dbReference>
<dbReference type="CDD" id="cd02274">
    <property type="entry name" value="DHDPR_N"/>
    <property type="match status" value="1"/>
</dbReference>
<dbReference type="Gene3D" id="3.30.360.10">
    <property type="entry name" value="Dihydrodipicolinate Reductase, domain 2"/>
    <property type="match status" value="1"/>
</dbReference>
<dbReference type="Gene3D" id="3.40.50.720">
    <property type="entry name" value="NAD(P)-binding Rossmann-like Domain"/>
    <property type="match status" value="1"/>
</dbReference>
<dbReference type="HAMAP" id="MF_00102">
    <property type="entry name" value="DapB"/>
    <property type="match status" value="1"/>
</dbReference>
<dbReference type="InterPro" id="IPR022663">
    <property type="entry name" value="DapB_C"/>
</dbReference>
<dbReference type="InterPro" id="IPR000846">
    <property type="entry name" value="DapB_N"/>
</dbReference>
<dbReference type="InterPro" id="IPR022664">
    <property type="entry name" value="DapB_N_CS"/>
</dbReference>
<dbReference type="InterPro" id="IPR023940">
    <property type="entry name" value="DHDPR_bac"/>
</dbReference>
<dbReference type="InterPro" id="IPR036291">
    <property type="entry name" value="NAD(P)-bd_dom_sf"/>
</dbReference>
<dbReference type="NCBIfam" id="TIGR00036">
    <property type="entry name" value="dapB"/>
    <property type="match status" value="1"/>
</dbReference>
<dbReference type="PANTHER" id="PTHR20836:SF0">
    <property type="entry name" value="4-HYDROXY-TETRAHYDRODIPICOLINATE REDUCTASE 1, CHLOROPLASTIC-RELATED"/>
    <property type="match status" value="1"/>
</dbReference>
<dbReference type="PANTHER" id="PTHR20836">
    <property type="entry name" value="DIHYDRODIPICOLINATE REDUCTASE"/>
    <property type="match status" value="1"/>
</dbReference>
<dbReference type="Pfam" id="PF05173">
    <property type="entry name" value="DapB_C"/>
    <property type="match status" value="1"/>
</dbReference>
<dbReference type="Pfam" id="PF01113">
    <property type="entry name" value="DapB_N"/>
    <property type="match status" value="1"/>
</dbReference>
<dbReference type="PIRSF" id="PIRSF000161">
    <property type="entry name" value="DHPR"/>
    <property type="match status" value="1"/>
</dbReference>
<dbReference type="SUPFAM" id="SSF55347">
    <property type="entry name" value="Glyceraldehyde-3-phosphate dehydrogenase-like, C-terminal domain"/>
    <property type="match status" value="1"/>
</dbReference>
<dbReference type="SUPFAM" id="SSF51735">
    <property type="entry name" value="NAD(P)-binding Rossmann-fold domains"/>
    <property type="match status" value="1"/>
</dbReference>
<dbReference type="PROSITE" id="PS01298">
    <property type="entry name" value="DAPB"/>
    <property type="match status" value="1"/>
</dbReference>
<evidence type="ECO:0000255" key="1">
    <source>
        <dbReference type="HAMAP-Rule" id="MF_00102"/>
    </source>
</evidence>
<evidence type="ECO:0000305" key="2"/>
<gene>
    <name evidence="1" type="primary">dapB</name>
    <name type="ordered locus">GbCGDNIH1_2408</name>
</gene>